<dbReference type="EC" id="3.1.-.-"/>
<dbReference type="EMBL" id="U00096">
    <property type="protein sequence ID" value="AAC74422.1"/>
    <property type="molecule type" value="Genomic_DNA"/>
</dbReference>
<dbReference type="EMBL" id="AP009048">
    <property type="protein sequence ID" value="BAE76405.1"/>
    <property type="molecule type" value="Genomic_DNA"/>
</dbReference>
<dbReference type="PIR" id="G64883">
    <property type="entry name" value="G64883"/>
</dbReference>
<dbReference type="RefSeq" id="NP_415856.1">
    <property type="nucleotide sequence ID" value="NC_000913.3"/>
</dbReference>
<dbReference type="RefSeq" id="WP_001046829.1">
    <property type="nucleotide sequence ID" value="NZ_SSZK01000012.1"/>
</dbReference>
<dbReference type="PDB" id="3QD7">
    <property type="method" value="X-ray"/>
    <property type="resolution" value="2.30 A"/>
    <property type="chains" value="X=39-175"/>
</dbReference>
<dbReference type="PDBsum" id="3QD7"/>
<dbReference type="SMR" id="P76053"/>
<dbReference type="BioGRID" id="4262880">
    <property type="interactions" value="7"/>
</dbReference>
<dbReference type="FunCoup" id="P76053">
    <property type="interactions" value="68"/>
</dbReference>
<dbReference type="IntAct" id="P76053">
    <property type="interactions" value="1"/>
</dbReference>
<dbReference type="STRING" id="511145.b1340"/>
<dbReference type="jPOST" id="P76053"/>
<dbReference type="PaxDb" id="511145-b1340"/>
<dbReference type="EnsemblBacteria" id="AAC74422">
    <property type="protein sequence ID" value="AAC74422"/>
    <property type="gene ID" value="b1340"/>
</dbReference>
<dbReference type="GeneID" id="75171466"/>
<dbReference type="GeneID" id="945953"/>
<dbReference type="KEGG" id="ecj:JW1334"/>
<dbReference type="KEGG" id="eco:b1340"/>
<dbReference type="KEGG" id="ecoc:C3026_07850"/>
<dbReference type="PATRIC" id="fig|1411691.4.peg.937"/>
<dbReference type="EchoBASE" id="EB3137"/>
<dbReference type="eggNOG" id="COG2840">
    <property type="taxonomic scope" value="Bacteria"/>
</dbReference>
<dbReference type="HOGENOM" id="CLU_055978_1_2_6"/>
<dbReference type="InParanoid" id="P76053"/>
<dbReference type="OMA" id="DKHSMEP"/>
<dbReference type="OrthoDB" id="9808881at2"/>
<dbReference type="PhylomeDB" id="P76053"/>
<dbReference type="BioCyc" id="EcoCyc:G6672-MONOMER"/>
<dbReference type="EvolutionaryTrace" id="P76053"/>
<dbReference type="PRO" id="PR:P76053"/>
<dbReference type="Proteomes" id="UP000000625">
    <property type="component" value="Chromosome"/>
</dbReference>
<dbReference type="GO" id="GO:0003677">
    <property type="term" value="F:DNA binding"/>
    <property type="evidence" value="ECO:0000314"/>
    <property type="project" value="EcoCyc"/>
</dbReference>
<dbReference type="GO" id="GO:0004520">
    <property type="term" value="F:DNA endonuclease activity"/>
    <property type="evidence" value="ECO:0000314"/>
    <property type="project" value="EcoCyc"/>
</dbReference>
<dbReference type="FunFam" id="3.30.1370.110:FF:000001">
    <property type="entry name" value="DNA endonuclease SmrA"/>
    <property type="match status" value="1"/>
</dbReference>
<dbReference type="Gene3D" id="3.30.1370.110">
    <property type="match status" value="1"/>
</dbReference>
<dbReference type="InterPro" id="IPR047688">
    <property type="entry name" value="Endonuc_SmrA"/>
</dbReference>
<dbReference type="InterPro" id="IPR002625">
    <property type="entry name" value="Smr_dom"/>
</dbReference>
<dbReference type="InterPro" id="IPR036063">
    <property type="entry name" value="Smr_dom_sf"/>
</dbReference>
<dbReference type="NCBIfam" id="NF033154">
    <property type="entry name" value="endonuc_SmrA"/>
    <property type="match status" value="1"/>
</dbReference>
<dbReference type="PANTHER" id="PTHR35562">
    <property type="entry name" value="DNA ENDONUCLEASE SMRA-RELATED"/>
    <property type="match status" value="1"/>
</dbReference>
<dbReference type="PANTHER" id="PTHR35562:SF2">
    <property type="entry name" value="DNA ENDONUCLEASE SMRA-RELATED"/>
    <property type="match status" value="1"/>
</dbReference>
<dbReference type="Pfam" id="PF01713">
    <property type="entry name" value="Smr"/>
    <property type="match status" value="1"/>
</dbReference>
<dbReference type="SMART" id="SM00463">
    <property type="entry name" value="SMR"/>
    <property type="match status" value="1"/>
</dbReference>
<dbReference type="SUPFAM" id="SSF160443">
    <property type="entry name" value="SMR domain-like"/>
    <property type="match status" value="1"/>
</dbReference>
<dbReference type="PROSITE" id="PS50828">
    <property type="entry name" value="SMR"/>
    <property type="match status" value="1"/>
</dbReference>
<gene>
    <name type="primary">smrA</name>
    <name type="synonym">ydaL</name>
    <name type="ordered locus">b1340</name>
    <name type="ordered locus">JW1334</name>
</gene>
<feature type="chain" id="PRO_0000168906" description="Probable DNA endonuclease SmrA">
    <location>
        <begin position="1"/>
        <end position="187"/>
    </location>
</feature>
<feature type="domain" description="Smr" evidence="1">
    <location>
        <begin position="88"/>
        <end position="169"/>
    </location>
</feature>
<feature type="sequence conflict" description="In Ref. 3; AA sequence." evidence="3" ref="3">
    <original>D</original>
    <variation>E</variation>
    <location>
        <position position="40"/>
    </location>
</feature>
<feature type="sequence conflict" description="In Ref. 3; AA sequence." evidence="3" ref="3">
    <original>D</original>
    <variation>E</variation>
    <location>
        <position position="45"/>
    </location>
</feature>
<feature type="helix" evidence="4">
    <location>
        <begin position="43"/>
        <end position="45"/>
    </location>
</feature>
<feature type="strand" evidence="4">
    <location>
        <begin position="63"/>
        <end position="65"/>
    </location>
</feature>
<feature type="turn" evidence="4">
    <location>
        <begin position="71"/>
        <end position="74"/>
    </location>
</feature>
<feature type="helix" evidence="4">
    <location>
        <begin position="75"/>
        <end position="78"/>
    </location>
</feature>
<feature type="helix" evidence="4">
    <location>
        <begin position="84"/>
        <end position="86"/>
    </location>
</feature>
<feature type="strand" evidence="4">
    <location>
        <begin position="87"/>
        <end position="89"/>
    </location>
</feature>
<feature type="helix" evidence="4">
    <location>
        <begin position="95"/>
        <end position="111"/>
    </location>
</feature>
<feature type="strand" evidence="4">
    <location>
        <begin position="115"/>
        <end position="120"/>
    </location>
</feature>
<feature type="helix" evidence="4">
    <location>
        <begin position="130"/>
        <end position="143"/>
    </location>
</feature>
<feature type="strand" evidence="4">
    <location>
        <begin position="148"/>
        <end position="153"/>
    </location>
</feature>
<feature type="helix" evidence="4">
    <location>
        <begin position="156"/>
        <end position="158"/>
    </location>
</feature>
<feature type="helix" evidence="4">
    <location>
        <begin position="160"/>
        <end position="162"/>
    </location>
</feature>
<feature type="strand" evidence="4">
    <location>
        <begin position="163"/>
        <end position="168"/>
    </location>
</feature>
<sequence>MNLDDKSLFLDAMEDVQPLKRATDVHWHPTRNQRAPQRIDTLQLDNFLTTGFLDIIPLSQPLEFRREGLQHGVLDKLRSGKYPQQASLNLLRQPVEECRKMVFSFIQQALADGLRNVLIIHGKGRDDKSHANIVRSYVARWLTEFDDVQAYCTALPHHGGSGACYVALRKTAQAKQENWERHAKRSR</sequence>
<comment type="function">
    <text evidence="2">Has DNA endonuclease activity. Binds DNA.</text>
</comment>
<keyword id="KW-0002">3D-structure</keyword>
<keyword id="KW-0903">Direct protein sequencing</keyword>
<keyword id="KW-0238">DNA-binding</keyword>
<keyword id="KW-0255">Endonuclease</keyword>
<keyword id="KW-0378">Hydrolase</keyword>
<keyword id="KW-0540">Nuclease</keyword>
<keyword id="KW-1185">Reference proteome</keyword>
<proteinExistence type="evidence at protein level"/>
<protein>
    <recommendedName>
        <fullName>Probable DNA endonuclease SmrA</fullName>
        <ecNumber>3.1.-.-</ecNumber>
    </recommendedName>
</protein>
<evidence type="ECO:0000255" key="1">
    <source>
        <dbReference type="PROSITE-ProRule" id="PRU00321"/>
    </source>
</evidence>
<evidence type="ECO:0000269" key="2">
    <source>
    </source>
</evidence>
<evidence type="ECO:0000305" key="3"/>
<evidence type="ECO:0007829" key="4">
    <source>
        <dbReference type="PDB" id="3QD7"/>
    </source>
</evidence>
<accession>P76053</accession>
<accession>Q2MBF1</accession>
<organism>
    <name type="scientific">Escherichia coli (strain K12)</name>
    <dbReference type="NCBI Taxonomy" id="83333"/>
    <lineage>
        <taxon>Bacteria</taxon>
        <taxon>Pseudomonadati</taxon>
        <taxon>Pseudomonadota</taxon>
        <taxon>Gammaproteobacteria</taxon>
        <taxon>Enterobacterales</taxon>
        <taxon>Enterobacteriaceae</taxon>
        <taxon>Escherichia</taxon>
    </lineage>
</organism>
<name>SMRA_ECOLI</name>
<reference key="1">
    <citation type="journal article" date="1997" name="Science">
        <title>The complete genome sequence of Escherichia coli K-12.</title>
        <authorList>
            <person name="Blattner F.R."/>
            <person name="Plunkett G. III"/>
            <person name="Bloch C.A."/>
            <person name="Perna N.T."/>
            <person name="Burland V."/>
            <person name="Riley M."/>
            <person name="Collado-Vides J."/>
            <person name="Glasner J.D."/>
            <person name="Rode C.K."/>
            <person name="Mayhew G.F."/>
            <person name="Gregor J."/>
            <person name="Davis N.W."/>
            <person name="Kirkpatrick H.A."/>
            <person name="Goeden M.A."/>
            <person name="Rose D.J."/>
            <person name="Mau B."/>
            <person name="Shao Y."/>
        </authorList>
    </citation>
    <scope>NUCLEOTIDE SEQUENCE [LARGE SCALE GENOMIC DNA]</scope>
    <source>
        <strain>K12 / MG1655 / ATCC 47076</strain>
    </source>
</reference>
<reference key="2">
    <citation type="journal article" date="2006" name="Mol. Syst. Biol.">
        <title>Highly accurate genome sequences of Escherichia coli K-12 strains MG1655 and W3110.</title>
        <authorList>
            <person name="Hayashi K."/>
            <person name="Morooka N."/>
            <person name="Yamamoto Y."/>
            <person name="Fujita K."/>
            <person name="Isono K."/>
            <person name="Choi S."/>
            <person name="Ohtsubo E."/>
            <person name="Baba T."/>
            <person name="Wanner B.L."/>
            <person name="Mori H."/>
            <person name="Horiuchi T."/>
        </authorList>
    </citation>
    <scope>NUCLEOTIDE SEQUENCE [LARGE SCALE GENOMIC DNA]</scope>
    <source>
        <strain>K12 / W3110 / ATCC 27325 / DSM 5911</strain>
    </source>
</reference>
<reference key="3">
    <citation type="journal article" date="2011" name="J. Struct. Biol.">
        <title>Crystal structure of YdaL, a stand-alone small MutS-related protein from Escherichia coli.</title>
        <authorList>
            <person name="Gui W.J."/>
            <person name="Qu Q.H."/>
            <person name="Chen Y.Y."/>
            <person name="Wang M."/>
            <person name="Zhang X.E."/>
            <person name="Bi L.J."/>
            <person name="Jiang T."/>
        </authorList>
    </citation>
    <scope>X-RAY CRYSTALLOGRAPHY (2.3 ANGSTROMS) OF 39-175</scope>
    <scope>PROTEIN SEQUENCE OF 39-45</scope>
    <scope>DNA-BINDING</scope>
    <scope>FUNCTION</scope>
</reference>